<accession>A9YWR6</accession>
<feature type="chain" id="PRO_0000450019" description="ABC transporter G family member STR2">
    <location>
        <begin position="1"/>
        <end position="727"/>
    </location>
</feature>
<feature type="topological domain" description="Cytoplasmic" evidence="6">
    <location>
        <begin position="1"/>
        <end position="475"/>
    </location>
</feature>
<feature type="transmembrane region" description="Helical; Name=1" evidence="1">
    <location>
        <begin position="476"/>
        <end position="496"/>
    </location>
</feature>
<feature type="topological domain" description="Extracellular" evidence="6">
    <location>
        <begin position="497"/>
        <end position="510"/>
    </location>
</feature>
<feature type="transmembrane region" description="Helical; Name=2" evidence="1">
    <location>
        <begin position="511"/>
        <end position="531"/>
    </location>
</feature>
<feature type="topological domain" description="Cytoplasmic" evidence="6">
    <location>
        <begin position="532"/>
        <end position="559"/>
    </location>
</feature>
<feature type="transmembrane region" description="Helical; Name=3" evidence="1">
    <location>
        <begin position="560"/>
        <end position="580"/>
    </location>
</feature>
<feature type="topological domain" description="Extracellular" evidence="6">
    <location>
        <begin position="581"/>
        <end position="583"/>
    </location>
</feature>
<feature type="transmembrane region" description="Helical; Name=4" evidence="1">
    <location>
        <begin position="584"/>
        <end position="604"/>
    </location>
</feature>
<feature type="topological domain" description="Cytoplasmic" evidence="6">
    <location>
        <begin position="605"/>
        <end position="612"/>
    </location>
</feature>
<feature type="transmembrane region" description="Helical; Name=5" evidence="1">
    <location>
        <begin position="613"/>
        <end position="633"/>
    </location>
</feature>
<feature type="topological domain" description="Extracellular" evidence="6">
    <location>
        <begin position="634"/>
        <end position="699"/>
    </location>
</feature>
<feature type="transmembrane region" description="Helical; Name=6" evidence="1">
    <location>
        <begin position="700"/>
        <end position="720"/>
    </location>
</feature>
<feature type="topological domain" description="Cytoplasmic" evidence="6">
    <location>
        <begin position="721"/>
        <end position="727"/>
    </location>
</feature>
<feature type="domain" description="ABC transporter" evidence="2">
    <location>
        <begin position="25"/>
        <end position="275"/>
    </location>
</feature>
<feature type="binding site" evidence="2">
    <location>
        <begin position="69"/>
        <end position="76"/>
    </location>
    <ligand>
        <name>ATP</name>
        <dbReference type="ChEBI" id="CHEBI:30616"/>
    </ligand>
</feature>
<feature type="glycosylation site" description="N-linked (GlcNAc...) asparagine" evidence="3">
    <location>
        <position position="667"/>
    </location>
</feature>
<reference key="1">
    <citation type="journal article" date="2005" name="Mol. Genet. Genomics">
        <title>Significant microsynteny with new evolutionary highlights is detected between Arabidopsis and legume model plants despite the lack of macrosynteny.</title>
        <authorList>
            <person name="Kevei Z."/>
            <person name="Seres A."/>
            <person name="Kereszt A."/>
            <person name="Kalo P."/>
            <person name="Kiss P."/>
            <person name="Toth G."/>
            <person name="Endre G."/>
            <person name="Kiss G.B."/>
        </authorList>
    </citation>
    <scope>NUCLEOTIDE SEQUENCE [GENOMIC DNA]</scope>
    <source>
        <strain>cv. Jemalong A17</strain>
    </source>
</reference>
<reference key="2">
    <citation type="journal article" date="2010" name="Plant Cell">
        <title>Two Medicago truncatula half-ABC transporters are essential for arbuscule development in arbuscular mycorrhizal symbiosis.</title>
        <authorList>
            <person name="Zhang Q."/>
            <person name="Blaylock L.A."/>
            <person name="Harrison M.J."/>
        </authorList>
    </citation>
    <scope>NUCLEOTIDE SEQUENCE [GENOMIC DNA / MRNA]</scope>
    <scope>FUNCTION</scope>
    <scope>DISRUPTION PHENOTYPE</scope>
    <scope>TISSUE SPECIFICITY</scope>
    <scope>INDUCTION BY GLOMUS VERSIFORME</scope>
    <scope>INTERACTION WITH STR</scope>
    <scope>SUBCELLULAR LOCATION</scope>
</reference>
<reference key="3">
    <citation type="journal article" date="2011" name="Nature">
        <title>The Medicago genome provides insight into the evolution of rhizobial symbioses.</title>
        <authorList>
            <person name="Young N.D."/>
            <person name="Debelle F."/>
            <person name="Oldroyd G.E.D."/>
            <person name="Geurts R."/>
            <person name="Cannon S.B."/>
            <person name="Udvardi M.K."/>
            <person name="Benedito V.A."/>
            <person name="Mayer K.F.X."/>
            <person name="Gouzy J."/>
            <person name="Schoof H."/>
            <person name="Van de Peer Y."/>
            <person name="Proost S."/>
            <person name="Cook D.R."/>
            <person name="Meyers B.C."/>
            <person name="Spannagl M."/>
            <person name="Cheung F."/>
            <person name="De Mita S."/>
            <person name="Krishnakumar V."/>
            <person name="Gundlach H."/>
            <person name="Zhou S."/>
            <person name="Mudge J."/>
            <person name="Bharti A.K."/>
            <person name="Murray J.D."/>
            <person name="Naoumkina M.A."/>
            <person name="Rosen B."/>
            <person name="Silverstein K.A.T."/>
            <person name="Tang H."/>
            <person name="Rombauts S."/>
            <person name="Zhao P.X."/>
            <person name="Zhou P."/>
            <person name="Barbe V."/>
            <person name="Bardou P."/>
            <person name="Bechner M."/>
            <person name="Bellec A."/>
            <person name="Berger A."/>
            <person name="Berges H."/>
            <person name="Bidwell S."/>
            <person name="Bisseling T."/>
            <person name="Choisne N."/>
            <person name="Couloux A."/>
            <person name="Denny R."/>
            <person name="Deshpande S."/>
            <person name="Dai X."/>
            <person name="Doyle J.J."/>
            <person name="Dudez A.-M."/>
            <person name="Farmer A.D."/>
            <person name="Fouteau S."/>
            <person name="Franken C."/>
            <person name="Gibelin C."/>
            <person name="Gish J."/>
            <person name="Goldstein S."/>
            <person name="Gonzalez A.J."/>
            <person name="Green P.J."/>
            <person name="Hallab A."/>
            <person name="Hartog M."/>
            <person name="Hua A."/>
            <person name="Humphray S.J."/>
            <person name="Jeong D.-H."/>
            <person name="Jing Y."/>
            <person name="Jocker A."/>
            <person name="Kenton S.M."/>
            <person name="Kim D.-J."/>
            <person name="Klee K."/>
            <person name="Lai H."/>
            <person name="Lang C."/>
            <person name="Lin S."/>
            <person name="Macmil S.L."/>
            <person name="Magdelenat G."/>
            <person name="Matthews L."/>
            <person name="McCorrison J."/>
            <person name="Monaghan E.L."/>
            <person name="Mun J.-H."/>
            <person name="Najar F.Z."/>
            <person name="Nicholson C."/>
            <person name="Noirot C."/>
            <person name="O'Bleness M."/>
            <person name="Paule C.R."/>
            <person name="Poulain J."/>
            <person name="Prion F."/>
            <person name="Qin B."/>
            <person name="Qu C."/>
            <person name="Retzel E.F."/>
            <person name="Riddle C."/>
            <person name="Sallet E."/>
            <person name="Samain S."/>
            <person name="Samson N."/>
            <person name="Sanders I."/>
            <person name="Saurat O."/>
            <person name="Scarpelli C."/>
            <person name="Schiex T."/>
            <person name="Segurens B."/>
            <person name="Severin A.J."/>
            <person name="Sherrier D.J."/>
            <person name="Shi R."/>
            <person name="Sims S."/>
            <person name="Singer S.R."/>
            <person name="Sinharoy S."/>
            <person name="Sterck L."/>
            <person name="Viollet A."/>
            <person name="Wang B.-B."/>
            <person name="Wang K."/>
            <person name="Wang M."/>
            <person name="Wang X."/>
            <person name="Warfsmann J."/>
            <person name="Weissenbach J."/>
            <person name="White D.D."/>
            <person name="White J.D."/>
            <person name="Wiley G.B."/>
            <person name="Wincker P."/>
            <person name="Xing Y."/>
            <person name="Yang L."/>
            <person name="Yao Z."/>
            <person name="Ying F."/>
            <person name="Zhai J."/>
            <person name="Zhou L."/>
            <person name="Zuber A."/>
            <person name="Denarie J."/>
            <person name="Dixon R.A."/>
            <person name="May G.D."/>
            <person name="Schwartz D.C."/>
            <person name="Rogers J."/>
            <person name="Quetier F."/>
            <person name="Town C.D."/>
            <person name="Roe B.A."/>
        </authorList>
    </citation>
    <scope>NUCLEOTIDE SEQUENCE [LARGE SCALE GENOMIC DNA]</scope>
    <source>
        <strain>cv. Jemalong A17</strain>
    </source>
</reference>
<reference key="4">
    <citation type="journal article" date="2014" name="BMC Genomics">
        <title>An improved genome release (version Mt4.0) for the model legume Medicago truncatula.</title>
        <authorList>
            <person name="Tang H."/>
            <person name="Krishnakumar V."/>
            <person name="Bidwell S."/>
            <person name="Rosen B."/>
            <person name="Chan A."/>
            <person name="Zhou S."/>
            <person name="Gentzbittel L."/>
            <person name="Childs K.L."/>
            <person name="Yandell M."/>
            <person name="Gundlach H."/>
            <person name="Mayer K.F."/>
            <person name="Schwartz D.C."/>
            <person name="Town C.D."/>
        </authorList>
    </citation>
    <scope>GENOME REANNOTATION</scope>
    <source>
        <strain>cv. Jemalong A17</strain>
    </source>
</reference>
<reference key="5">
    <citation type="journal article" date="2018" name="Nat. Plants">
        <title>Whole-genome landscape of Medicago truncatula symbiotic genes.</title>
        <authorList>
            <person name="Pecrix Y."/>
            <person name="Staton S.E."/>
            <person name="Sallet E."/>
            <person name="Lelandais-Briere C."/>
            <person name="Moreau S."/>
            <person name="Carrere S."/>
            <person name="Blein T."/>
            <person name="Jardinaud M.F."/>
            <person name="Latrasse D."/>
            <person name="Zouine M."/>
            <person name="Zahm M."/>
            <person name="Kreplak J."/>
            <person name="Mayjonade B."/>
            <person name="Satge C."/>
            <person name="Perez M."/>
            <person name="Cauet S."/>
            <person name="Marande W."/>
            <person name="Chantry-Darmon C."/>
            <person name="Lopez-Roques C."/>
            <person name="Bouchez O."/>
            <person name="Berard A."/>
            <person name="Debelle F."/>
            <person name="Munos S."/>
            <person name="Bendahmane A."/>
            <person name="Berges H."/>
            <person name="Niebel A."/>
            <person name="Buitink J."/>
            <person name="Frugier F."/>
            <person name="Benhamed M."/>
            <person name="Crespi M."/>
            <person name="Gouzy J."/>
            <person name="Gamas P."/>
        </authorList>
    </citation>
    <scope>NUCLEOTIDE SEQUENCE [LARGE SCALE GENOMIC DNA]</scope>
    <source>
        <strain>cv. Jemalong A17</strain>
    </source>
</reference>
<dbReference type="EC" id="7.6.2.-"/>
<dbReference type="EMBL" id="EU306659">
    <property type="protein sequence ID" value="ABY48138.1"/>
    <property type="molecule type" value="Genomic_DNA"/>
</dbReference>
<dbReference type="EMBL" id="FJ659116">
    <property type="protein sequence ID" value="ACV73543.1"/>
    <property type="molecule type" value="Genomic_DNA"/>
</dbReference>
<dbReference type="EMBL" id="FJ659117">
    <property type="protein sequence ID" value="ACV73544.1"/>
    <property type="molecule type" value="mRNA"/>
</dbReference>
<dbReference type="EMBL" id="CM001221">
    <property type="protein sequence ID" value="AES95907.1"/>
    <property type="molecule type" value="Genomic_DNA"/>
</dbReference>
<dbReference type="EMBL" id="PSQE01000005">
    <property type="protein sequence ID" value="RHN54875.1"/>
    <property type="molecule type" value="Genomic_DNA"/>
</dbReference>
<dbReference type="RefSeq" id="XP_003612949.1">
    <property type="nucleotide sequence ID" value="XM_003612901.2"/>
</dbReference>
<dbReference type="SMR" id="A9YWR6"/>
<dbReference type="STRING" id="3880.A9YWR6"/>
<dbReference type="TCDB" id="3.A.1.204.22">
    <property type="family name" value="the atp-binding cassette (abc) superfamily"/>
</dbReference>
<dbReference type="GlyCosmos" id="A9YWR6">
    <property type="glycosylation" value="1 site, No reported glycans"/>
</dbReference>
<dbReference type="PaxDb" id="3880-AES95907"/>
<dbReference type="EnsemblPlants" id="rna29972">
    <property type="protein sequence ID" value="RHN54875.1"/>
    <property type="gene ID" value="gene29972"/>
</dbReference>
<dbReference type="GeneID" id="11407838"/>
<dbReference type="Gramene" id="rna29972">
    <property type="protein sequence ID" value="RHN54875.1"/>
    <property type="gene ID" value="gene29972"/>
</dbReference>
<dbReference type="KEGG" id="mtr:11407838"/>
<dbReference type="eggNOG" id="KOG0061">
    <property type="taxonomic scope" value="Eukaryota"/>
</dbReference>
<dbReference type="HOGENOM" id="CLU_000604_57_8_1"/>
<dbReference type="OMA" id="SETWVLM"/>
<dbReference type="OrthoDB" id="66620at2759"/>
<dbReference type="Proteomes" id="UP000002051">
    <property type="component" value="Chromosome 5"/>
</dbReference>
<dbReference type="Proteomes" id="UP000265566">
    <property type="component" value="Chromosome 5"/>
</dbReference>
<dbReference type="GO" id="GO:0016020">
    <property type="term" value="C:membrane"/>
    <property type="evidence" value="ECO:0000318"/>
    <property type="project" value="GO_Central"/>
</dbReference>
<dbReference type="GO" id="GO:0085042">
    <property type="term" value="C:periarbuscular membrane"/>
    <property type="evidence" value="ECO:0000314"/>
    <property type="project" value="UniProtKB"/>
</dbReference>
<dbReference type="GO" id="GO:0005886">
    <property type="term" value="C:plasma membrane"/>
    <property type="evidence" value="ECO:0007669"/>
    <property type="project" value="UniProtKB-SubCell"/>
</dbReference>
<dbReference type="GO" id="GO:0140359">
    <property type="term" value="F:ABC-type transporter activity"/>
    <property type="evidence" value="ECO:0007669"/>
    <property type="project" value="InterPro"/>
</dbReference>
<dbReference type="GO" id="GO:0005524">
    <property type="term" value="F:ATP binding"/>
    <property type="evidence" value="ECO:0007669"/>
    <property type="project" value="UniProtKB-KW"/>
</dbReference>
<dbReference type="GO" id="GO:0016887">
    <property type="term" value="F:ATP hydrolysis activity"/>
    <property type="evidence" value="ECO:0007669"/>
    <property type="project" value="InterPro"/>
</dbReference>
<dbReference type="GO" id="GO:0042626">
    <property type="term" value="F:ATPase-coupled transmembrane transporter activity"/>
    <property type="evidence" value="ECO:0000318"/>
    <property type="project" value="GO_Central"/>
</dbReference>
<dbReference type="GO" id="GO:0036377">
    <property type="term" value="P:arbuscular mycorrhizal association"/>
    <property type="evidence" value="ECO:0000315"/>
    <property type="project" value="UniProtKB"/>
</dbReference>
<dbReference type="GO" id="GO:0009610">
    <property type="term" value="P:response to symbiotic fungus"/>
    <property type="evidence" value="ECO:0000270"/>
    <property type="project" value="UniProtKB"/>
</dbReference>
<dbReference type="GO" id="GO:0055085">
    <property type="term" value="P:transmembrane transport"/>
    <property type="evidence" value="ECO:0000318"/>
    <property type="project" value="GO_Central"/>
</dbReference>
<dbReference type="CDD" id="cd03213">
    <property type="entry name" value="ABCG_EPDR"/>
    <property type="match status" value="1"/>
</dbReference>
<dbReference type="FunFam" id="3.40.50.300:FF:001556">
    <property type="entry name" value="ABC transporter G family member 6"/>
    <property type="match status" value="1"/>
</dbReference>
<dbReference type="Gene3D" id="3.40.50.300">
    <property type="entry name" value="P-loop containing nucleotide triphosphate hydrolases"/>
    <property type="match status" value="1"/>
</dbReference>
<dbReference type="InterPro" id="IPR003593">
    <property type="entry name" value="AAA+_ATPase"/>
</dbReference>
<dbReference type="InterPro" id="IPR013525">
    <property type="entry name" value="ABC2_TM"/>
</dbReference>
<dbReference type="InterPro" id="IPR003439">
    <property type="entry name" value="ABC_transporter-like_ATP-bd"/>
</dbReference>
<dbReference type="InterPro" id="IPR017871">
    <property type="entry name" value="ABC_transporter-like_CS"/>
</dbReference>
<dbReference type="InterPro" id="IPR043926">
    <property type="entry name" value="ABCG_dom"/>
</dbReference>
<dbReference type="InterPro" id="IPR050352">
    <property type="entry name" value="ABCG_transporters"/>
</dbReference>
<dbReference type="InterPro" id="IPR027417">
    <property type="entry name" value="P-loop_NTPase"/>
</dbReference>
<dbReference type="PANTHER" id="PTHR48041">
    <property type="entry name" value="ABC TRANSPORTER G FAMILY MEMBER 28"/>
    <property type="match status" value="1"/>
</dbReference>
<dbReference type="PANTHER" id="PTHR48041:SF20">
    <property type="entry name" value="ABC TRANSPORTER G FAMILY MEMBER STR2"/>
    <property type="match status" value="1"/>
</dbReference>
<dbReference type="Pfam" id="PF01061">
    <property type="entry name" value="ABC2_membrane"/>
    <property type="match status" value="1"/>
</dbReference>
<dbReference type="Pfam" id="PF19055">
    <property type="entry name" value="ABC2_membrane_7"/>
    <property type="match status" value="1"/>
</dbReference>
<dbReference type="Pfam" id="PF00005">
    <property type="entry name" value="ABC_tran"/>
    <property type="match status" value="1"/>
</dbReference>
<dbReference type="SMART" id="SM00382">
    <property type="entry name" value="AAA"/>
    <property type="match status" value="1"/>
</dbReference>
<dbReference type="SUPFAM" id="SSF52540">
    <property type="entry name" value="P-loop containing nucleoside triphosphate hydrolases"/>
    <property type="match status" value="1"/>
</dbReference>
<dbReference type="PROSITE" id="PS00211">
    <property type="entry name" value="ABC_TRANSPORTER_1"/>
    <property type="match status" value="1"/>
</dbReference>
<dbReference type="PROSITE" id="PS50893">
    <property type="entry name" value="ABC_TRANSPORTER_2"/>
    <property type="match status" value="1"/>
</dbReference>
<comment type="function">
    <text evidence="4">Together with STR, required for arbuscule development in arbuscular mycorrhizal symbiosis.</text>
</comment>
<comment type="subunit">
    <text evidence="4">Heterodimerizes with STR; the resulting transporter is located in the peri-arbuscular membrane.</text>
</comment>
<comment type="subcellular location">
    <subcellularLocation>
        <location evidence="4">Cell membrane</location>
        <topology evidence="1">Multi-pass membrane protein</topology>
    </subcellularLocation>
    <text evidence="4">Located in the peri-arbuscular membrane of arbuscular mycorrhiza (AM).</text>
</comment>
<comment type="tissue specificity">
    <text evidence="4">Expressed constitutively in the vascular tissue of roots.</text>
</comment>
<comment type="induction">
    <text evidence="4">Accumulates in root cortical cells containing arbuscules upon arbuscular mycorrhizal (AM) symbiosis with Glomus versiforme.</text>
</comment>
<comment type="disruption phenotype">
    <text evidence="4">Stunted arbuscule phenotype due to an impaired arbuscule development during arbuscular mycorrhizal (AM) symbiosis with Glomus versiforme; normal initial phases of the symbiosis, including hyphopodia formation and fungal entry into the cortex, as well as normal arbuscule development initiation, including arbuscule-associated genes expression, but strongly delayed and impaired arbuscule development (PubMed:20453115). Normal nodulation in the presence of Sinorhizobium meliloti (PubMed:20453115).</text>
</comment>
<comment type="similarity">
    <text evidence="6">Belongs to the ABC transporter superfamily. ABCG family. Stunted arbuscule (STR) subfamily.</text>
</comment>
<organism>
    <name type="scientific">Medicago truncatula</name>
    <name type="common">Barrel medic</name>
    <name type="synonym">Medicago tribuloides</name>
    <dbReference type="NCBI Taxonomy" id="3880"/>
    <lineage>
        <taxon>Eukaryota</taxon>
        <taxon>Viridiplantae</taxon>
        <taxon>Streptophyta</taxon>
        <taxon>Embryophyta</taxon>
        <taxon>Tracheophyta</taxon>
        <taxon>Spermatophyta</taxon>
        <taxon>Magnoliopsida</taxon>
        <taxon>eudicotyledons</taxon>
        <taxon>Gunneridae</taxon>
        <taxon>Pentapetalae</taxon>
        <taxon>rosids</taxon>
        <taxon>fabids</taxon>
        <taxon>Fabales</taxon>
        <taxon>Fabaceae</taxon>
        <taxon>Papilionoideae</taxon>
        <taxon>50 kb inversion clade</taxon>
        <taxon>NPAAA clade</taxon>
        <taxon>Hologalegina</taxon>
        <taxon>IRL clade</taxon>
        <taxon>Trifolieae</taxon>
        <taxon>Medicago</taxon>
    </lineage>
</organism>
<protein>
    <recommendedName>
        <fullName evidence="5">ABC transporter G family member STR2</fullName>
        <ecNumber>7.6.2.-</ecNumber>
    </recommendedName>
    <alternativeName>
        <fullName evidence="5">Protein STUNTED ARBUSCULE 2</fullName>
    </alternativeName>
</protein>
<name>STR2_MEDTR</name>
<evidence type="ECO:0000255" key="1"/>
<evidence type="ECO:0000255" key="2">
    <source>
        <dbReference type="PROSITE-ProRule" id="PRU00434"/>
    </source>
</evidence>
<evidence type="ECO:0000255" key="3">
    <source>
        <dbReference type="PROSITE-ProRule" id="PRU00498"/>
    </source>
</evidence>
<evidence type="ECO:0000269" key="4">
    <source>
    </source>
</evidence>
<evidence type="ECO:0000303" key="5">
    <source>
    </source>
</evidence>
<evidence type="ECO:0000305" key="6"/>
<evidence type="ECO:0000312" key="7">
    <source>
        <dbReference type="EMBL" id="AES95907.1"/>
    </source>
</evidence>
<evidence type="ECO:0000312" key="8">
    <source>
        <dbReference type="EMBL" id="RHN54875.1"/>
    </source>
</evidence>
<proteinExistence type="evidence at protein level"/>
<sequence length="727" mass="81603">MKTQGLELETVIDIKHKPVSFTGGLEFESLTYTVTKKKKVDGKWSNEDVDLLHDITGYAPKGCITAVMGPSGAGKSTLLDGLAGRIASGSLKGKVSLDGNSVNASLIKRTSAYIMQEDRLFPMLTVYETLMFAADFRLGPLSAVDKRQRVEKLIEQLGLSSSRNTYIGDEGTRGVSGGERRRVSIGVDIIHGPSLLFLDEPTSGLDSTSALSVIEKLHDIARNGSTVILTIHQPSSRIQLLLDHLIILARGQLMFQGSLKDVGHHLNRMGRKIPKGENPIENLIDVIQEYDQCDFVGVEVLAEFARTGMKPPLLSDMEEIISYTNSIAPSPSPLHRGSKYEEKSQDFSYSSQISRRSLNDEFDHSIRSPYNNTPMSWSASNSAAFLKFTPSRLKNENKVQKPPSHASPGIYTYSSEILPATPTPHSSDYVVDENDYLTPTNSSQEHLGPKFANSYIGETWILMRRNFTNIRRTPELFLSRLMVLTFMGVMMATMFHNPKNTLQGITNRLSFFIFTVCLFFFSSNDAVPAFIQERFIFIRETSHNAYRASCYTIASLITHMPFLALQALAYAAIVWFALELRGPFIYFFLVLFISLLSTNSFVVFVSSIVPNYILGYAAVIAFTALFFLFCGYFLSSEDIPLYWRWMNKVSTMTYPYEGLLMNEYQTNETFGSNDGVSITGFDILKSLHIGTEEIKKRNNVLIMLGWAVLYRILFYIILRFASKNQRS</sequence>
<gene>
    <name evidence="5" type="primary">STR2</name>
    <name evidence="7" type="ordered locus">MTR_5g030910</name>
    <name evidence="8" type="ORF">MtrunA17_Chr5g0411621</name>
</gene>
<keyword id="KW-0067">ATP-binding</keyword>
<keyword id="KW-1003">Cell membrane</keyword>
<keyword id="KW-0325">Glycoprotein</keyword>
<keyword id="KW-0378">Hydrolase</keyword>
<keyword id="KW-0472">Membrane</keyword>
<keyword id="KW-0547">Nucleotide-binding</keyword>
<keyword id="KW-1185">Reference proteome</keyword>
<keyword id="KW-1278">Translocase</keyword>
<keyword id="KW-0812">Transmembrane</keyword>
<keyword id="KW-1133">Transmembrane helix</keyword>
<keyword id="KW-0813">Transport</keyword>